<dbReference type="EC" id="2.4.1.182"/>
<dbReference type="EMBL" id="AE015925">
    <property type="protein sequence ID" value="AAP05533.1"/>
    <property type="molecule type" value="Genomic_DNA"/>
</dbReference>
<dbReference type="RefSeq" id="WP_011006747.1">
    <property type="nucleotide sequence ID" value="NC_003361.3"/>
</dbReference>
<dbReference type="SMR" id="Q821Z3"/>
<dbReference type="STRING" id="227941.CCA_00792"/>
<dbReference type="CAZy" id="GT19">
    <property type="family name" value="Glycosyltransferase Family 19"/>
</dbReference>
<dbReference type="KEGG" id="cca:CCA_00792"/>
<dbReference type="eggNOG" id="COG0763">
    <property type="taxonomic scope" value="Bacteria"/>
</dbReference>
<dbReference type="eggNOG" id="COG3952">
    <property type="taxonomic scope" value="Bacteria"/>
</dbReference>
<dbReference type="HOGENOM" id="CLU_430672_0_0_0"/>
<dbReference type="OrthoDB" id="9801642at2"/>
<dbReference type="UniPathway" id="UPA00973"/>
<dbReference type="Proteomes" id="UP000002193">
    <property type="component" value="Chromosome"/>
</dbReference>
<dbReference type="GO" id="GO:0016020">
    <property type="term" value="C:membrane"/>
    <property type="evidence" value="ECO:0007669"/>
    <property type="project" value="GOC"/>
</dbReference>
<dbReference type="GO" id="GO:0008915">
    <property type="term" value="F:lipid-A-disaccharide synthase activity"/>
    <property type="evidence" value="ECO:0007669"/>
    <property type="project" value="UniProtKB-UniRule"/>
</dbReference>
<dbReference type="GO" id="GO:0005543">
    <property type="term" value="F:phospholipid binding"/>
    <property type="evidence" value="ECO:0007669"/>
    <property type="project" value="TreeGrafter"/>
</dbReference>
<dbReference type="GO" id="GO:0009245">
    <property type="term" value="P:lipid A biosynthetic process"/>
    <property type="evidence" value="ECO:0007669"/>
    <property type="project" value="UniProtKB-UniRule"/>
</dbReference>
<dbReference type="HAMAP" id="MF_00392">
    <property type="entry name" value="LpxB"/>
    <property type="match status" value="1"/>
</dbReference>
<dbReference type="InterPro" id="IPR003835">
    <property type="entry name" value="Glyco_trans_19"/>
</dbReference>
<dbReference type="InterPro" id="IPR011499">
    <property type="entry name" value="Lipid_A_biosynth_N"/>
</dbReference>
<dbReference type="NCBIfam" id="TIGR00215">
    <property type="entry name" value="lpxB"/>
    <property type="match status" value="1"/>
</dbReference>
<dbReference type="NCBIfam" id="NF002173">
    <property type="entry name" value="PRK01021.1"/>
    <property type="match status" value="1"/>
</dbReference>
<dbReference type="PANTHER" id="PTHR30372">
    <property type="entry name" value="LIPID-A-DISACCHARIDE SYNTHASE"/>
    <property type="match status" value="1"/>
</dbReference>
<dbReference type="PANTHER" id="PTHR30372:SF4">
    <property type="entry name" value="LIPID-A-DISACCHARIDE SYNTHASE, MITOCHONDRIAL-RELATED"/>
    <property type="match status" value="1"/>
</dbReference>
<dbReference type="Pfam" id="PF07578">
    <property type="entry name" value="LAB_N"/>
    <property type="match status" value="2"/>
</dbReference>
<dbReference type="Pfam" id="PF02684">
    <property type="entry name" value="LpxB"/>
    <property type="match status" value="1"/>
</dbReference>
<dbReference type="SMART" id="SM01259">
    <property type="entry name" value="LAB_N"/>
    <property type="match status" value="2"/>
</dbReference>
<dbReference type="SUPFAM" id="SSF53756">
    <property type="entry name" value="UDP-Glycosyltransferase/glycogen phosphorylase"/>
    <property type="match status" value="1"/>
</dbReference>
<protein>
    <recommendedName>
        <fullName>Lipid-A-disaccharide synthase</fullName>
        <ecNumber>2.4.1.182</ecNumber>
    </recommendedName>
</protein>
<feature type="chain" id="PRO_0000190158" description="Lipid-A-disaccharide synthase">
    <location>
        <begin position="1"/>
        <end position="626"/>
    </location>
</feature>
<feature type="region of interest" description="Unknown">
    <location>
        <begin position="1"/>
        <end position="225"/>
    </location>
</feature>
<feature type="region of interest" description="Lipid-A-disaccharide synthase">
    <location>
        <begin position="226"/>
        <end position="626"/>
    </location>
</feature>
<proteinExistence type="inferred from homology"/>
<sequence length="626" mass="71491">MLPLYLVHVLYPIGLIANLFFGSAFTIQWLLSEKRKTAYVPKAFWVLSSIGAVMMIAHGFIQSQFPMALLHGANLVIYFRNLNIASSYKLSLTTTLVILVLTLLVTTLPFALAAYYYPYMEWMASPNFFHLPLPPPNIYWHIVGCLGLFTFSSRFFIQWCYLEMNNHSTLPALFWQAGFVGGFLAFIYFIRTGDPVNILSYGCGLLPSLANLRIIYKKSRLPKFHSPSCFLSAGEPSGDTLGSDLLRNIKELNPNIHCFGVGGPLMRKEGLEPLIRMEEFQVSGFLEVFCAVFSLYKKYRKLYKAILKENPETVFCIDFPDFHFFLIRKLRKCGYRGKIIHYVCPSIWAWRPNRKKILEKHLDTLLLILPFEKEIFKDSPLKTIYLGHPLVKTIANFQDCNAWKQQLEISDQPSVALFPGSRPGDIFRNLQVQARAFRSSSLAKSHQLLVSSCNPKYDKKILELLDKEGCHNNKIVPSKFRYQLMRDCDCALAKCGTIVLEAALNQTPTIVTCLLRPFDTFLAKYIFKIFIPAYSLPNIITGSVIFPEFIGGKHDFSPEEVAAAIDILANPIGKEKQKYACQQLLKTMTENVITPKECLQAIYAQKNRFYLKNDFIKEFHPKSSRA</sequence>
<accession>Q821Z3</accession>
<gene>
    <name type="primary">lpxB</name>
    <name type="ordered locus">CCA_00792</name>
</gene>
<keyword id="KW-0328">Glycosyltransferase</keyword>
<keyword id="KW-0441">Lipid A biosynthesis</keyword>
<keyword id="KW-0444">Lipid biosynthesis</keyword>
<keyword id="KW-0443">Lipid metabolism</keyword>
<keyword id="KW-0808">Transferase</keyword>
<comment type="function">
    <text evidence="1">Condensation of UDP-2,3-diacylglucosamine and 2,3-diacylglucosamine-1-phosphate to form lipid A disaccharide, a precursor of lipid A, a phosphorylated glycolipid that anchors the lipopolysaccharide to the outer membrane of the cell.</text>
</comment>
<comment type="catalytic activity">
    <reaction>
        <text>a lipid X + a UDP-2-N,3-O-bis[(3R)-3-hydroxyacyl]-alpha-D-glucosamine = a lipid A disaccharide + UDP + H(+)</text>
        <dbReference type="Rhea" id="RHEA:67828"/>
        <dbReference type="ChEBI" id="CHEBI:15378"/>
        <dbReference type="ChEBI" id="CHEBI:58223"/>
        <dbReference type="ChEBI" id="CHEBI:137748"/>
        <dbReference type="ChEBI" id="CHEBI:176338"/>
        <dbReference type="ChEBI" id="CHEBI:176343"/>
        <dbReference type="EC" id="2.4.1.182"/>
    </reaction>
</comment>
<comment type="pathway">
    <text>Bacterial outer membrane biogenesis; LPS lipid A biosynthesis.</text>
</comment>
<comment type="similarity">
    <text evidence="2">In the C-terminal section; belongs to the LpxB family.</text>
</comment>
<organism>
    <name type="scientific">Chlamydia caviae (strain ATCC VR-813 / DSM 19441 / 03DC25 / GPIC)</name>
    <name type="common">Chlamydophila caviae</name>
    <dbReference type="NCBI Taxonomy" id="227941"/>
    <lineage>
        <taxon>Bacteria</taxon>
        <taxon>Pseudomonadati</taxon>
        <taxon>Chlamydiota</taxon>
        <taxon>Chlamydiia</taxon>
        <taxon>Chlamydiales</taxon>
        <taxon>Chlamydiaceae</taxon>
        <taxon>Chlamydia/Chlamydophila group</taxon>
        <taxon>Chlamydia</taxon>
    </lineage>
</organism>
<evidence type="ECO:0000250" key="1"/>
<evidence type="ECO:0000305" key="2"/>
<reference key="1">
    <citation type="journal article" date="2003" name="Nucleic Acids Res.">
        <title>Genome sequence of Chlamydophila caviae (Chlamydia psittaci GPIC): examining the role of niche-specific genes in the evolution of the Chlamydiaceae.</title>
        <authorList>
            <person name="Read T.D."/>
            <person name="Myers G.S.A."/>
            <person name="Brunham R.C."/>
            <person name="Nelson W.C."/>
            <person name="Paulsen I.T."/>
            <person name="Heidelberg J.F."/>
            <person name="Holtzapple E.K."/>
            <person name="Khouri H.M."/>
            <person name="Federova N.B."/>
            <person name="Carty H.A."/>
            <person name="Umayam L.A."/>
            <person name="Haft D.H."/>
            <person name="Peterson J.D."/>
            <person name="Beanan M.J."/>
            <person name="White O."/>
            <person name="Salzberg S.L."/>
            <person name="Hsia R.-C."/>
            <person name="McClarty G."/>
            <person name="Rank R.G."/>
            <person name="Bavoil P.M."/>
            <person name="Fraser C.M."/>
        </authorList>
    </citation>
    <scope>NUCLEOTIDE SEQUENCE [LARGE SCALE GENOMIC DNA]</scope>
    <source>
        <strain>ATCC VR-813 / DSM 19441 / 03DC25 / GPIC</strain>
    </source>
</reference>
<name>LPXB_CHLCV</name>